<sequence>MRSHYCGALNRSHIGQQVILSGWVHKRRDLGGLIFIDMRDREGIVQVCFDPKYQEALTEASALRNEFCIKIEGEVIARPDNQINKNMATGEVEVVAKALSVYNVSDVLPLDFNQNNTEEQRLKYRYLDLRRPEMAQHLKTRAKITAFVRRYMDENGFLDIETPMLTKATPEGARDYLVPSRVHKGKFYALPQSPQLFKQLLMMSGFDRYYQIVKCFRDEDLRADRQPEFTQIDVETSFMTAPEVREIMEKMVHGLWLNTIGVDLGKFPTMTWQEAMERFGSDKPDLRNPLEIVDVADIVKDIDFNVFSDPANSSNGRVAVIRVPNGINITRKQIDEYTQFVGIYGAKGLAWVKINDINAGLEGVQSPIAKFLTTEKIKAIFDRTSAQSGDILFFGADKWQTATDAMGALRLKLGRDLGLTHLDEWKPLWVIDFPMFERDEEGNLAAMHHPFTSPKDFTPEQLEANPTSAVANAYDMVINGYEVGGGSVRIFDPKMQQTVFHILGIDEDQQREKFGFLLDALKFGTPPHAGLAFGLDRLTMLLTGTDNIRDVIAFPKTTAAACLMTDAPSLANEKALEELAIKTIM</sequence>
<name>SYD_HISS1</name>
<protein>
    <recommendedName>
        <fullName evidence="1">Aspartate--tRNA ligase</fullName>
        <ecNumber evidence="1">6.1.1.12</ecNumber>
    </recommendedName>
    <alternativeName>
        <fullName evidence="1">Aspartyl-tRNA synthetase</fullName>
        <shortName evidence="1">AspRS</shortName>
    </alternativeName>
</protein>
<feature type="chain" id="PRO_1000090997" description="Aspartate--tRNA ligase">
    <location>
        <begin position="1"/>
        <end position="585"/>
    </location>
</feature>
<feature type="region of interest" description="Aspartate" evidence="1">
    <location>
        <begin position="195"/>
        <end position="198"/>
    </location>
</feature>
<feature type="binding site" evidence="1">
    <location>
        <position position="171"/>
    </location>
    <ligand>
        <name>L-aspartate</name>
        <dbReference type="ChEBI" id="CHEBI:29991"/>
    </ligand>
</feature>
<feature type="binding site" evidence="1">
    <location>
        <begin position="217"/>
        <end position="219"/>
    </location>
    <ligand>
        <name>ATP</name>
        <dbReference type="ChEBI" id="CHEBI:30616"/>
    </ligand>
</feature>
<feature type="binding site" evidence="1">
    <location>
        <position position="217"/>
    </location>
    <ligand>
        <name>L-aspartate</name>
        <dbReference type="ChEBI" id="CHEBI:29991"/>
    </ligand>
</feature>
<feature type="binding site" evidence="1">
    <location>
        <position position="226"/>
    </location>
    <ligand>
        <name>ATP</name>
        <dbReference type="ChEBI" id="CHEBI:30616"/>
    </ligand>
</feature>
<feature type="binding site" evidence="1">
    <location>
        <position position="448"/>
    </location>
    <ligand>
        <name>L-aspartate</name>
        <dbReference type="ChEBI" id="CHEBI:29991"/>
    </ligand>
</feature>
<feature type="binding site" evidence="1">
    <location>
        <position position="482"/>
    </location>
    <ligand>
        <name>ATP</name>
        <dbReference type="ChEBI" id="CHEBI:30616"/>
    </ligand>
</feature>
<feature type="binding site" evidence="1">
    <location>
        <position position="489"/>
    </location>
    <ligand>
        <name>L-aspartate</name>
        <dbReference type="ChEBI" id="CHEBI:29991"/>
    </ligand>
</feature>
<feature type="binding site" evidence="1">
    <location>
        <begin position="534"/>
        <end position="537"/>
    </location>
    <ligand>
        <name>ATP</name>
        <dbReference type="ChEBI" id="CHEBI:30616"/>
    </ligand>
</feature>
<evidence type="ECO:0000255" key="1">
    <source>
        <dbReference type="HAMAP-Rule" id="MF_00044"/>
    </source>
</evidence>
<gene>
    <name evidence="1" type="primary">aspS</name>
    <name type="ordered locus">HS_1223</name>
</gene>
<dbReference type="EC" id="6.1.1.12" evidence="1"/>
<dbReference type="EMBL" id="CP000436">
    <property type="protein sequence ID" value="ABI25498.1"/>
    <property type="molecule type" value="Genomic_DNA"/>
</dbReference>
<dbReference type="SMR" id="Q0I3S3"/>
<dbReference type="KEGG" id="hso:HS_1223"/>
<dbReference type="eggNOG" id="COG0173">
    <property type="taxonomic scope" value="Bacteria"/>
</dbReference>
<dbReference type="HOGENOM" id="CLU_014330_3_2_6"/>
<dbReference type="GO" id="GO:0005737">
    <property type="term" value="C:cytoplasm"/>
    <property type="evidence" value="ECO:0007669"/>
    <property type="project" value="UniProtKB-SubCell"/>
</dbReference>
<dbReference type="GO" id="GO:0004815">
    <property type="term" value="F:aspartate-tRNA ligase activity"/>
    <property type="evidence" value="ECO:0007669"/>
    <property type="project" value="UniProtKB-UniRule"/>
</dbReference>
<dbReference type="GO" id="GO:0005524">
    <property type="term" value="F:ATP binding"/>
    <property type="evidence" value="ECO:0007669"/>
    <property type="project" value="UniProtKB-UniRule"/>
</dbReference>
<dbReference type="GO" id="GO:0003676">
    <property type="term" value="F:nucleic acid binding"/>
    <property type="evidence" value="ECO:0007669"/>
    <property type="project" value="InterPro"/>
</dbReference>
<dbReference type="GO" id="GO:0006422">
    <property type="term" value="P:aspartyl-tRNA aminoacylation"/>
    <property type="evidence" value="ECO:0007669"/>
    <property type="project" value="UniProtKB-UniRule"/>
</dbReference>
<dbReference type="CDD" id="cd00777">
    <property type="entry name" value="AspRS_core"/>
    <property type="match status" value="1"/>
</dbReference>
<dbReference type="CDD" id="cd04317">
    <property type="entry name" value="EcAspRS_like_N"/>
    <property type="match status" value="1"/>
</dbReference>
<dbReference type="FunFam" id="2.40.50.140:FF:000080">
    <property type="entry name" value="Aspartate--tRNA ligase"/>
    <property type="match status" value="1"/>
</dbReference>
<dbReference type="Gene3D" id="3.30.930.10">
    <property type="entry name" value="Bira Bifunctional Protein, Domain 2"/>
    <property type="match status" value="1"/>
</dbReference>
<dbReference type="Gene3D" id="3.30.1360.30">
    <property type="entry name" value="GAD-like domain"/>
    <property type="match status" value="1"/>
</dbReference>
<dbReference type="Gene3D" id="2.40.50.140">
    <property type="entry name" value="Nucleic acid-binding proteins"/>
    <property type="match status" value="1"/>
</dbReference>
<dbReference type="HAMAP" id="MF_00044">
    <property type="entry name" value="Asp_tRNA_synth_type1"/>
    <property type="match status" value="1"/>
</dbReference>
<dbReference type="InterPro" id="IPR004364">
    <property type="entry name" value="Aa-tRNA-synt_II"/>
</dbReference>
<dbReference type="InterPro" id="IPR006195">
    <property type="entry name" value="aa-tRNA-synth_II"/>
</dbReference>
<dbReference type="InterPro" id="IPR045864">
    <property type="entry name" value="aa-tRNA-synth_II/BPL/LPL"/>
</dbReference>
<dbReference type="InterPro" id="IPR004524">
    <property type="entry name" value="Asp-tRNA-ligase_1"/>
</dbReference>
<dbReference type="InterPro" id="IPR047089">
    <property type="entry name" value="Asp-tRNA-ligase_1_N"/>
</dbReference>
<dbReference type="InterPro" id="IPR002312">
    <property type="entry name" value="Asp/Asn-tRNA-synth_IIb"/>
</dbReference>
<dbReference type="InterPro" id="IPR047090">
    <property type="entry name" value="AspRS_core"/>
</dbReference>
<dbReference type="InterPro" id="IPR004115">
    <property type="entry name" value="GAD-like_sf"/>
</dbReference>
<dbReference type="InterPro" id="IPR029351">
    <property type="entry name" value="GAD_dom"/>
</dbReference>
<dbReference type="InterPro" id="IPR012340">
    <property type="entry name" value="NA-bd_OB-fold"/>
</dbReference>
<dbReference type="InterPro" id="IPR004365">
    <property type="entry name" value="NA-bd_OB_tRNA"/>
</dbReference>
<dbReference type="NCBIfam" id="TIGR00459">
    <property type="entry name" value="aspS_bact"/>
    <property type="match status" value="1"/>
</dbReference>
<dbReference type="NCBIfam" id="NF001750">
    <property type="entry name" value="PRK00476.1"/>
    <property type="match status" value="1"/>
</dbReference>
<dbReference type="PANTHER" id="PTHR22594:SF5">
    <property type="entry name" value="ASPARTATE--TRNA LIGASE, MITOCHONDRIAL"/>
    <property type="match status" value="1"/>
</dbReference>
<dbReference type="PANTHER" id="PTHR22594">
    <property type="entry name" value="ASPARTYL/LYSYL-TRNA SYNTHETASE"/>
    <property type="match status" value="1"/>
</dbReference>
<dbReference type="Pfam" id="PF02938">
    <property type="entry name" value="GAD"/>
    <property type="match status" value="1"/>
</dbReference>
<dbReference type="Pfam" id="PF00152">
    <property type="entry name" value="tRNA-synt_2"/>
    <property type="match status" value="1"/>
</dbReference>
<dbReference type="Pfam" id="PF01336">
    <property type="entry name" value="tRNA_anti-codon"/>
    <property type="match status" value="1"/>
</dbReference>
<dbReference type="PRINTS" id="PR01042">
    <property type="entry name" value="TRNASYNTHASP"/>
</dbReference>
<dbReference type="SUPFAM" id="SSF55681">
    <property type="entry name" value="Class II aaRS and biotin synthetases"/>
    <property type="match status" value="1"/>
</dbReference>
<dbReference type="SUPFAM" id="SSF55261">
    <property type="entry name" value="GAD domain-like"/>
    <property type="match status" value="1"/>
</dbReference>
<dbReference type="SUPFAM" id="SSF50249">
    <property type="entry name" value="Nucleic acid-binding proteins"/>
    <property type="match status" value="1"/>
</dbReference>
<dbReference type="PROSITE" id="PS50862">
    <property type="entry name" value="AA_TRNA_LIGASE_II"/>
    <property type="match status" value="1"/>
</dbReference>
<proteinExistence type="inferred from homology"/>
<accession>Q0I3S3</accession>
<reference key="1">
    <citation type="journal article" date="2007" name="J. Bacteriol.">
        <title>Complete genome sequence of Haemophilus somnus (Histophilus somni) strain 129Pt and comparison to Haemophilus ducreyi 35000HP and Haemophilus influenzae Rd.</title>
        <authorList>
            <person name="Challacombe J.F."/>
            <person name="Duncan A.J."/>
            <person name="Brettin T.S."/>
            <person name="Bruce D."/>
            <person name="Chertkov O."/>
            <person name="Detter J.C."/>
            <person name="Han C.S."/>
            <person name="Misra M."/>
            <person name="Richardson P."/>
            <person name="Tapia R."/>
            <person name="Thayer N."/>
            <person name="Xie G."/>
            <person name="Inzana T.J."/>
        </authorList>
    </citation>
    <scope>NUCLEOTIDE SEQUENCE [LARGE SCALE GENOMIC DNA]</scope>
    <source>
        <strain>129Pt</strain>
    </source>
</reference>
<organism>
    <name type="scientific">Histophilus somni (strain 129Pt)</name>
    <name type="common">Haemophilus somnus</name>
    <dbReference type="NCBI Taxonomy" id="205914"/>
    <lineage>
        <taxon>Bacteria</taxon>
        <taxon>Pseudomonadati</taxon>
        <taxon>Pseudomonadota</taxon>
        <taxon>Gammaproteobacteria</taxon>
        <taxon>Pasteurellales</taxon>
        <taxon>Pasteurellaceae</taxon>
        <taxon>Histophilus</taxon>
    </lineage>
</organism>
<comment type="function">
    <text evidence="1">Catalyzes the attachment of L-aspartate to tRNA(Asp) in a two-step reaction: L-aspartate is first activated by ATP to form Asp-AMP and then transferred to the acceptor end of tRNA(Asp).</text>
</comment>
<comment type="catalytic activity">
    <reaction evidence="1">
        <text>tRNA(Asp) + L-aspartate + ATP = L-aspartyl-tRNA(Asp) + AMP + diphosphate</text>
        <dbReference type="Rhea" id="RHEA:19649"/>
        <dbReference type="Rhea" id="RHEA-COMP:9660"/>
        <dbReference type="Rhea" id="RHEA-COMP:9678"/>
        <dbReference type="ChEBI" id="CHEBI:29991"/>
        <dbReference type="ChEBI" id="CHEBI:30616"/>
        <dbReference type="ChEBI" id="CHEBI:33019"/>
        <dbReference type="ChEBI" id="CHEBI:78442"/>
        <dbReference type="ChEBI" id="CHEBI:78516"/>
        <dbReference type="ChEBI" id="CHEBI:456215"/>
        <dbReference type="EC" id="6.1.1.12"/>
    </reaction>
</comment>
<comment type="subunit">
    <text evidence="1">Homodimer.</text>
</comment>
<comment type="subcellular location">
    <subcellularLocation>
        <location evidence="1">Cytoplasm</location>
    </subcellularLocation>
</comment>
<comment type="similarity">
    <text evidence="1">Belongs to the class-II aminoacyl-tRNA synthetase family. Type 1 subfamily.</text>
</comment>
<keyword id="KW-0030">Aminoacyl-tRNA synthetase</keyword>
<keyword id="KW-0067">ATP-binding</keyword>
<keyword id="KW-0963">Cytoplasm</keyword>
<keyword id="KW-0436">Ligase</keyword>
<keyword id="KW-0547">Nucleotide-binding</keyword>
<keyword id="KW-0648">Protein biosynthesis</keyword>